<dbReference type="EMBL" id="AF156890">
    <property type="protein sequence ID" value="AAD40308.1"/>
    <property type="molecule type" value="mRNA"/>
</dbReference>
<dbReference type="EMBL" id="AF188286">
    <property type="protein sequence ID" value="AAD56961.1"/>
    <property type="molecule type" value="mRNA"/>
</dbReference>
<dbReference type="EMBL" id="AK147029">
    <property type="protein sequence ID" value="BAE27621.1"/>
    <property type="molecule type" value="mRNA"/>
</dbReference>
<dbReference type="EMBL" id="CH466573">
    <property type="protein sequence ID" value="EDL24862.1"/>
    <property type="molecule type" value="Genomic_DNA"/>
</dbReference>
<dbReference type="EMBL" id="BC103625">
    <property type="protein sequence ID" value="AAI03626.1"/>
    <property type="molecule type" value="mRNA"/>
</dbReference>
<dbReference type="EMBL" id="BC103679">
    <property type="protein sequence ID" value="AAI03680.1"/>
    <property type="molecule type" value="mRNA"/>
</dbReference>
<dbReference type="EMBL" id="BC103680">
    <property type="protein sequence ID" value="AAI03681.1"/>
    <property type="molecule type" value="mRNA"/>
</dbReference>
<dbReference type="EMBL" id="BC103681">
    <property type="protein sequence ID" value="AAI03682.1"/>
    <property type="molecule type" value="mRNA"/>
</dbReference>
<dbReference type="CCDS" id="CCDS26928.1"/>
<dbReference type="RefSeq" id="NP_062379.3">
    <property type="nucleotide sequence ID" value="NM_019506.4"/>
</dbReference>
<dbReference type="PDB" id="4YCG">
    <property type="method" value="X-ray"/>
    <property type="resolution" value="3.30 A"/>
    <property type="chains" value="A/B=23-318"/>
</dbReference>
<dbReference type="PDB" id="4YCI">
    <property type="method" value="X-ray"/>
    <property type="resolution" value="3.25 A"/>
    <property type="chains" value="A/B=23-318"/>
</dbReference>
<dbReference type="PDBsum" id="4YCG"/>
<dbReference type="PDBsum" id="4YCI"/>
<dbReference type="SMR" id="Q9WV56"/>
<dbReference type="BioGRID" id="198370">
    <property type="interactions" value="1"/>
</dbReference>
<dbReference type="FunCoup" id="Q9WV56">
    <property type="interactions" value="329"/>
</dbReference>
<dbReference type="STRING" id="10090.ENSMUSP00000098286"/>
<dbReference type="GlyCosmos" id="Q9WV56">
    <property type="glycosylation" value="3 sites, No reported glycans"/>
</dbReference>
<dbReference type="GlyGen" id="Q9WV56">
    <property type="glycosylation" value="3 sites"/>
</dbReference>
<dbReference type="iPTMnet" id="Q9WV56"/>
<dbReference type="PhosphoSitePlus" id="Q9WV56"/>
<dbReference type="PaxDb" id="10090-ENSMUSP00000098286"/>
<dbReference type="ProteomicsDB" id="267785"/>
<dbReference type="Antibodypedia" id="72423">
    <property type="antibodies" value="398 antibodies from 35 providers"/>
</dbReference>
<dbReference type="DNASU" id="12165"/>
<dbReference type="Ensembl" id="ENSMUST00000100720.2">
    <property type="protein sequence ID" value="ENSMUSP00000098286.2"/>
    <property type="gene ID" value="ENSMUSG00000072625.2"/>
</dbReference>
<dbReference type="GeneID" id="12165"/>
<dbReference type="KEGG" id="mmu:12165"/>
<dbReference type="UCSC" id="uc007tac.1">
    <property type="organism name" value="mouse"/>
</dbReference>
<dbReference type="AGR" id="MGI:1321394"/>
<dbReference type="CTD" id="2658"/>
<dbReference type="MGI" id="MGI:1321394">
    <property type="gene designation" value="Gdf2"/>
</dbReference>
<dbReference type="VEuPathDB" id="HostDB:ENSMUSG00000072625"/>
<dbReference type="eggNOG" id="KOG3900">
    <property type="taxonomic scope" value="Eukaryota"/>
</dbReference>
<dbReference type="GeneTree" id="ENSGT00940000159802"/>
<dbReference type="HOGENOM" id="CLU_020515_2_0_1"/>
<dbReference type="InParanoid" id="Q9WV56"/>
<dbReference type="OMA" id="GTFDLRM"/>
<dbReference type="OrthoDB" id="5987191at2759"/>
<dbReference type="PhylomeDB" id="Q9WV56"/>
<dbReference type="TreeFam" id="TF316134"/>
<dbReference type="Reactome" id="R-MMU-201451">
    <property type="pathway name" value="Signaling by BMP"/>
</dbReference>
<dbReference type="BioGRID-ORCS" id="12165">
    <property type="hits" value="2 hits in 77 CRISPR screens"/>
</dbReference>
<dbReference type="EvolutionaryTrace" id="Q9WV56"/>
<dbReference type="PRO" id="PR:Q9WV56"/>
<dbReference type="Proteomes" id="UP000000589">
    <property type="component" value="Chromosome 14"/>
</dbReference>
<dbReference type="RNAct" id="Q9WV56">
    <property type="molecule type" value="protein"/>
</dbReference>
<dbReference type="Bgee" id="ENSMUSG00000072625">
    <property type="expression patterns" value="Expressed in hepatobiliary system and 30 other cell types or tissues"/>
</dbReference>
<dbReference type="GO" id="GO:0005615">
    <property type="term" value="C:extracellular space"/>
    <property type="evidence" value="ECO:0007669"/>
    <property type="project" value="UniProtKB-KW"/>
</dbReference>
<dbReference type="GO" id="GO:0005125">
    <property type="term" value="F:cytokine activity"/>
    <property type="evidence" value="ECO:0007669"/>
    <property type="project" value="UniProtKB-KW"/>
</dbReference>
<dbReference type="GO" id="GO:0008083">
    <property type="term" value="F:growth factor activity"/>
    <property type="evidence" value="ECO:0007669"/>
    <property type="project" value="UniProtKB-KW"/>
</dbReference>
<dbReference type="GO" id="GO:0043539">
    <property type="term" value="F:protein serine/threonine kinase activator activity"/>
    <property type="evidence" value="ECO:0007669"/>
    <property type="project" value="Ensembl"/>
</dbReference>
<dbReference type="GO" id="GO:0032924">
    <property type="term" value="P:activin receptor signaling pathway"/>
    <property type="evidence" value="ECO:0007669"/>
    <property type="project" value="Ensembl"/>
</dbReference>
<dbReference type="GO" id="GO:0001525">
    <property type="term" value="P:angiogenesis"/>
    <property type="evidence" value="ECO:0000250"/>
    <property type="project" value="UniProtKB"/>
</dbReference>
<dbReference type="GO" id="GO:0030509">
    <property type="term" value="P:BMP signaling pathway"/>
    <property type="evidence" value="ECO:0007669"/>
    <property type="project" value="Ensembl"/>
</dbReference>
<dbReference type="GO" id="GO:0001569">
    <property type="term" value="P:branching involved in blood vessel morphogenesis"/>
    <property type="evidence" value="ECO:0000314"/>
    <property type="project" value="DFLAT"/>
</dbReference>
<dbReference type="GO" id="GO:0006006">
    <property type="term" value="P:glucose metabolic process"/>
    <property type="evidence" value="ECO:0000304"/>
    <property type="project" value="DFLAT"/>
</dbReference>
<dbReference type="GO" id="GO:0006879">
    <property type="term" value="P:intracellular iron ion homeostasis"/>
    <property type="evidence" value="ECO:0000304"/>
    <property type="project" value="DFLAT"/>
</dbReference>
<dbReference type="GO" id="GO:0030308">
    <property type="term" value="P:negative regulation of cell growth"/>
    <property type="evidence" value="ECO:0007669"/>
    <property type="project" value="Ensembl"/>
</dbReference>
<dbReference type="GO" id="GO:0010596">
    <property type="term" value="P:negative regulation of endothelial cell migration"/>
    <property type="evidence" value="ECO:0007669"/>
    <property type="project" value="Ensembl"/>
</dbReference>
<dbReference type="GO" id="GO:0001937">
    <property type="term" value="P:negative regulation of endothelial cell proliferation"/>
    <property type="evidence" value="ECO:0007669"/>
    <property type="project" value="Ensembl"/>
</dbReference>
<dbReference type="GO" id="GO:0030182">
    <property type="term" value="P:neuron differentiation"/>
    <property type="evidence" value="ECO:0000304"/>
    <property type="project" value="DFLAT"/>
</dbReference>
<dbReference type="GO" id="GO:0001649">
    <property type="term" value="P:osteoblast differentiation"/>
    <property type="evidence" value="ECO:0000316"/>
    <property type="project" value="MGI"/>
</dbReference>
<dbReference type="GO" id="GO:0045766">
    <property type="term" value="P:positive regulation of angiogenesis"/>
    <property type="evidence" value="ECO:0000314"/>
    <property type="project" value="DFLAT"/>
</dbReference>
<dbReference type="GO" id="GO:1903348">
    <property type="term" value="P:positive regulation of bicellular tight junction assembly"/>
    <property type="evidence" value="ECO:0007669"/>
    <property type="project" value="Ensembl"/>
</dbReference>
<dbReference type="GO" id="GO:0030513">
    <property type="term" value="P:positive regulation of BMP signaling pathway"/>
    <property type="evidence" value="ECO:0000314"/>
    <property type="project" value="DFLAT"/>
</dbReference>
<dbReference type="GO" id="GO:0061036">
    <property type="term" value="P:positive regulation of cartilage development"/>
    <property type="evidence" value="ECO:0000314"/>
    <property type="project" value="UniProtKB"/>
</dbReference>
<dbReference type="GO" id="GO:0045893">
    <property type="term" value="P:positive regulation of DNA-templated transcription"/>
    <property type="evidence" value="ECO:0000315"/>
    <property type="project" value="DFLAT"/>
</dbReference>
<dbReference type="GO" id="GO:0045603">
    <property type="term" value="P:positive regulation of endothelial cell differentiation"/>
    <property type="evidence" value="ECO:0000314"/>
    <property type="project" value="DFLAT"/>
</dbReference>
<dbReference type="GO" id="GO:0001938">
    <property type="term" value="P:positive regulation of endothelial cell proliferation"/>
    <property type="evidence" value="ECO:0000314"/>
    <property type="project" value="DFLAT"/>
</dbReference>
<dbReference type="GO" id="GO:0010628">
    <property type="term" value="P:positive regulation of gene expression"/>
    <property type="evidence" value="ECO:0000314"/>
    <property type="project" value="MGI"/>
</dbReference>
<dbReference type="GO" id="GO:0032757">
    <property type="term" value="P:positive regulation of interleukin-8 production"/>
    <property type="evidence" value="ECO:0007669"/>
    <property type="project" value="Ensembl"/>
</dbReference>
<dbReference type="GO" id="GO:0045747">
    <property type="term" value="P:positive regulation of Notch signaling pathway"/>
    <property type="evidence" value="ECO:0007669"/>
    <property type="project" value="Ensembl"/>
</dbReference>
<dbReference type="GO" id="GO:0060391">
    <property type="term" value="P:positive regulation of SMAD protein signal transduction"/>
    <property type="evidence" value="ECO:0007669"/>
    <property type="project" value="Ensembl"/>
</dbReference>
<dbReference type="GO" id="GO:0045944">
    <property type="term" value="P:positive regulation of transcription by RNA polymerase II"/>
    <property type="evidence" value="ECO:0000314"/>
    <property type="project" value="MGI"/>
</dbReference>
<dbReference type="GO" id="GO:0006366">
    <property type="term" value="P:transcription by RNA polymerase II"/>
    <property type="evidence" value="ECO:0000314"/>
    <property type="project" value="MGI"/>
</dbReference>
<dbReference type="GO" id="GO:0001570">
    <property type="term" value="P:vasculogenesis"/>
    <property type="evidence" value="ECO:0000314"/>
    <property type="project" value="DFLAT"/>
</dbReference>
<dbReference type="CDD" id="cd19400">
    <property type="entry name" value="TGF_beta_BMP9"/>
    <property type="match status" value="1"/>
</dbReference>
<dbReference type="FunFam" id="2.10.90.10:FF:000001">
    <property type="entry name" value="Bone morphogenetic protein 4"/>
    <property type="match status" value="1"/>
</dbReference>
<dbReference type="FunFam" id="2.60.120.970:FF:000014">
    <property type="entry name" value="growth/differentiation factor 2"/>
    <property type="match status" value="1"/>
</dbReference>
<dbReference type="Gene3D" id="2.60.120.970">
    <property type="match status" value="1"/>
</dbReference>
<dbReference type="Gene3D" id="2.10.90.10">
    <property type="entry name" value="Cystine-knot cytokines"/>
    <property type="match status" value="1"/>
</dbReference>
<dbReference type="InterPro" id="IPR029034">
    <property type="entry name" value="Cystine-knot_cytokine"/>
</dbReference>
<dbReference type="InterPro" id="IPR001839">
    <property type="entry name" value="TGF-b_C"/>
</dbReference>
<dbReference type="InterPro" id="IPR001111">
    <property type="entry name" value="TGF-b_propeptide"/>
</dbReference>
<dbReference type="InterPro" id="IPR015615">
    <property type="entry name" value="TGF-beta-rel"/>
</dbReference>
<dbReference type="InterPro" id="IPR017948">
    <property type="entry name" value="TGFb_CS"/>
</dbReference>
<dbReference type="PANTHER" id="PTHR11848:SF157">
    <property type="entry name" value="GROWTH_DIFFERENTIATION FACTOR 2"/>
    <property type="match status" value="1"/>
</dbReference>
<dbReference type="PANTHER" id="PTHR11848">
    <property type="entry name" value="TGF-BETA FAMILY"/>
    <property type="match status" value="1"/>
</dbReference>
<dbReference type="Pfam" id="PF00019">
    <property type="entry name" value="TGF_beta"/>
    <property type="match status" value="1"/>
</dbReference>
<dbReference type="Pfam" id="PF00688">
    <property type="entry name" value="TGFb_propeptide"/>
    <property type="match status" value="1"/>
</dbReference>
<dbReference type="PRINTS" id="PR00669">
    <property type="entry name" value="INHIBINA"/>
</dbReference>
<dbReference type="SMART" id="SM00204">
    <property type="entry name" value="TGFB"/>
    <property type="match status" value="1"/>
</dbReference>
<dbReference type="SUPFAM" id="SSF57501">
    <property type="entry name" value="Cystine-knot cytokines"/>
    <property type="match status" value="1"/>
</dbReference>
<dbReference type="PROSITE" id="PS00250">
    <property type="entry name" value="TGF_BETA_1"/>
    <property type="match status" value="1"/>
</dbReference>
<dbReference type="PROSITE" id="PS51362">
    <property type="entry name" value="TGF_BETA_2"/>
    <property type="match status" value="1"/>
</dbReference>
<gene>
    <name type="primary">Gdf2</name>
    <name type="synonym">Bmp9</name>
</gene>
<evidence type="ECO:0000250" key="1"/>
<evidence type="ECO:0000250" key="2">
    <source>
        <dbReference type="UniProtKB" id="Q9UK05"/>
    </source>
</evidence>
<evidence type="ECO:0000255" key="3"/>
<evidence type="ECO:0000269" key="4">
    <source>
    </source>
</evidence>
<evidence type="ECO:0000269" key="5">
    <source>
    </source>
</evidence>
<evidence type="ECO:0000305" key="6"/>
<evidence type="ECO:0007744" key="7">
    <source>
        <dbReference type="PDB" id="4YCG"/>
    </source>
</evidence>
<evidence type="ECO:0007744" key="8">
    <source>
        <dbReference type="PDB" id="4YCI"/>
    </source>
</evidence>
<evidence type="ECO:0007829" key="9">
    <source>
        <dbReference type="PDB" id="4YCI"/>
    </source>
</evidence>
<accession>Q9WV56</accession>
<accession>Q3ZAS6</accession>
<accession>Q9QZE0</accession>
<reference key="1">
    <citation type="submission" date="1999-06" db="EMBL/GenBank/DDBJ databases">
        <title>Growth/differentiation factor-2, a new TGF-beta family member with bone promoting activities.</title>
        <authorList>
            <person name="Zimmers T.A."/>
            <person name="Koniaris L.G."/>
            <person name="Sitzmann J.V."/>
            <person name="Lee S.-J."/>
        </authorList>
    </citation>
    <scope>NUCLEOTIDE SEQUENCE [MRNA]</scope>
    <source>
        <strain>CD-1</strain>
        <tissue>Liver</tissue>
    </source>
</reference>
<reference key="2">
    <citation type="submission" date="1999-09" db="EMBL/GenBank/DDBJ databases">
        <authorList>
            <person name="Celeste A.J."/>
        </authorList>
    </citation>
    <scope>NUCLEOTIDE SEQUENCE [MRNA]</scope>
    <source>
        <tissue>Liver</tissue>
    </source>
</reference>
<reference key="3">
    <citation type="journal article" date="2005" name="Science">
        <title>The transcriptional landscape of the mammalian genome.</title>
        <authorList>
            <person name="Carninci P."/>
            <person name="Kasukawa T."/>
            <person name="Katayama S."/>
            <person name="Gough J."/>
            <person name="Frith M.C."/>
            <person name="Maeda N."/>
            <person name="Oyama R."/>
            <person name="Ravasi T."/>
            <person name="Lenhard B."/>
            <person name="Wells C."/>
            <person name="Kodzius R."/>
            <person name="Shimokawa K."/>
            <person name="Bajic V.B."/>
            <person name="Brenner S.E."/>
            <person name="Batalov S."/>
            <person name="Forrest A.R."/>
            <person name="Zavolan M."/>
            <person name="Davis M.J."/>
            <person name="Wilming L.G."/>
            <person name="Aidinis V."/>
            <person name="Allen J.E."/>
            <person name="Ambesi-Impiombato A."/>
            <person name="Apweiler R."/>
            <person name="Aturaliya R.N."/>
            <person name="Bailey T.L."/>
            <person name="Bansal M."/>
            <person name="Baxter L."/>
            <person name="Beisel K.W."/>
            <person name="Bersano T."/>
            <person name="Bono H."/>
            <person name="Chalk A.M."/>
            <person name="Chiu K.P."/>
            <person name="Choudhary V."/>
            <person name="Christoffels A."/>
            <person name="Clutterbuck D.R."/>
            <person name="Crowe M.L."/>
            <person name="Dalla E."/>
            <person name="Dalrymple B.P."/>
            <person name="de Bono B."/>
            <person name="Della Gatta G."/>
            <person name="di Bernardo D."/>
            <person name="Down T."/>
            <person name="Engstrom P."/>
            <person name="Fagiolini M."/>
            <person name="Faulkner G."/>
            <person name="Fletcher C.F."/>
            <person name="Fukushima T."/>
            <person name="Furuno M."/>
            <person name="Futaki S."/>
            <person name="Gariboldi M."/>
            <person name="Georgii-Hemming P."/>
            <person name="Gingeras T.R."/>
            <person name="Gojobori T."/>
            <person name="Green R.E."/>
            <person name="Gustincich S."/>
            <person name="Harbers M."/>
            <person name="Hayashi Y."/>
            <person name="Hensch T.K."/>
            <person name="Hirokawa N."/>
            <person name="Hill D."/>
            <person name="Huminiecki L."/>
            <person name="Iacono M."/>
            <person name="Ikeo K."/>
            <person name="Iwama A."/>
            <person name="Ishikawa T."/>
            <person name="Jakt M."/>
            <person name="Kanapin A."/>
            <person name="Katoh M."/>
            <person name="Kawasawa Y."/>
            <person name="Kelso J."/>
            <person name="Kitamura H."/>
            <person name="Kitano H."/>
            <person name="Kollias G."/>
            <person name="Krishnan S.P."/>
            <person name="Kruger A."/>
            <person name="Kummerfeld S.K."/>
            <person name="Kurochkin I.V."/>
            <person name="Lareau L.F."/>
            <person name="Lazarevic D."/>
            <person name="Lipovich L."/>
            <person name="Liu J."/>
            <person name="Liuni S."/>
            <person name="McWilliam S."/>
            <person name="Madan Babu M."/>
            <person name="Madera M."/>
            <person name="Marchionni L."/>
            <person name="Matsuda H."/>
            <person name="Matsuzawa S."/>
            <person name="Miki H."/>
            <person name="Mignone F."/>
            <person name="Miyake S."/>
            <person name="Morris K."/>
            <person name="Mottagui-Tabar S."/>
            <person name="Mulder N."/>
            <person name="Nakano N."/>
            <person name="Nakauchi H."/>
            <person name="Ng P."/>
            <person name="Nilsson R."/>
            <person name="Nishiguchi S."/>
            <person name="Nishikawa S."/>
            <person name="Nori F."/>
            <person name="Ohara O."/>
            <person name="Okazaki Y."/>
            <person name="Orlando V."/>
            <person name="Pang K.C."/>
            <person name="Pavan W.J."/>
            <person name="Pavesi G."/>
            <person name="Pesole G."/>
            <person name="Petrovsky N."/>
            <person name="Piazza S."/>
            <person name="Reed J."/>
            <person name="Reid J.F."/>
            <person name="Ring B.Z."/>
            <person name="Ringwald M."/>
            <person name="Rost B."/>
            <person name="Ruan Y."/>
            <person name="Salzberg S.L."/>
            <person name="Sandelin A."/>
            <person name="Schneider C."/>
            <person name="Schoenbach C."/>
            <person name="Sekiguchi K."/>
            <person name="Semple C.A."/>
            <person name="Seno S."/>
            <person name="Sessa L."/>
            <person name="Sheng Y."/>
            <person name="Shibata Y."/>
            <person name="Shimada H."/>
            <person name="Shimada K."/>
            <person name="Silva D."/>
            <person name="Sinclair B."/>
            <person name="Sperling S."/>
            <person name="Stupka E."/>
            <person name="Sugiura K."/>
            <person name="Sultana R."/>
            <person name="Takenaka Y."/>
            <person name="Taki K."/>
            <person name="Tammoja K."/>
            <person name="Tan S.L."/>
            <person name="Tang S."/>
            <person name="Taylor M.S."/>
            <person name="Tegner J."/>
            <person name="Teichmann S.A."/>
            <person name="Ueda H.R."/>
            <person name="van Nimwegen E."/>
            <person name="Verardo R."/>
            <person name="Wei C.L."/>
            <person name="Yagi K."/>
            <person name="Yamanishi H."/>
            <person name="Zabarovsky E."/>
            <person name="Zhu S."/>
            <person name="Zimmer A."/>
            <person name="Hide W."/>
            <person name="Bult C."/>
            <person name="Grimmond S.M."/>
            <person name="Teasdale R.D."/>
            <person name="Liu E.T."/>
            <person name="Brusic V."/>
            <person name="Quackenbush J."/>
            <person name="Wahlestedt C."/>
            <person name="Mattick J.S."/>
            <person name="Hume D.A."/>
            <person name="Kai C."/>
            <person name="Sasaki D."/>
            <person name="Tomaru Y."/>
            <person name="Fukuda S."/>
            <person name="Kanamori-Katayama M."/>
            <person name="Suzuki M."/>
            <person name="Aoki J."/>
            <person name="Arakawa T."/>
            <person name="Iida J."/>
            <person name="Imamura K."/>
            <person name="Itoh M."/>
            <person name="Kato T."/>
            <person name="Kawaji H."/>
            <person name="Kawagashira N."/>
            <person name="Kawashima T."/>
            <person name="Kojima M."/>
            <person name="Kondo S."/>
            <person name="Konno H."/>
            <person name="Nakano K."/>
            <person name="Ninomiya N."/>
            <person name="Nishio T."/>
            <person name="Okada M."/>
            <person name="Plessy C."/>
            <person name="Shibata K."/>
            <person name="Shiraki T."/>
            <person name="Suzuki S."/>
            <person name="Tagami M."/>
            <person name="Waki K."/>
            <person name="Watahiki A."/>
            <person name="Okamura-Oho Y."/>
            <person name="Suzuki H."/>
            <person name="Kawai J."/>
            <person name="Hayashizaki Y."/>
        </authorList>
    </citation>
    <scope>NUCLEOTIDE SEQUENCE [LARGE SCALE MRNA]</scope>
    <source>
        <strain>C57BL/6J</strain>
        <tissue>Liver</tissue>
    </source>
</reference>
<reference key="4">
    <citation type="submission" date="2005-07" db="EMBL/GenBank/DDBJ databases">
        <authorList>
            <person name="Mural R.J."/>
            <person name="Adams M.D."/>
            <person name="Myers E.W."/>
            <person name="Smith H.O."/>
            <person name="Venter J.C."/>
        </authorList>
    </citation>
    <scope>NUCLEOTIDE SEQUENCE [LARGE SCALE GENOMIC DNA]</scope>
</reference>
<reference key="5">
    <citation type="journal article" date="2004" name="Genome Res.">
        <title>The status, quality, and expansion of the NIH full-length cDNA project: the Mammalian Gene Collection (MGC).</title>
        <authorList>
            <consortium name="The MGC Project Team"/>
        </authorList>
    </citation>
    <scope>NUCLEOTIDE SEQUENCE [LARGE SCALE MRNA]</scope>
</reference>
<reference key="6">
    <citation type="journal article" date="2012" name="PLoS ONE">
        <title>Endoglin requirement for BMP9 signaling in endothelial cells reveals new mechanism of action for selective anti-endoglin antibodies.</title>
        <authorList>
            <person name="Nolan-Stevaux O."/>
            <person name="Zhong W."/>
            <person name="Culp S."/>
            <person name="Shaffer K."/>
            <person name="Hoover J."/>
            <person name="Wickramasinghe D."/>
            <person name="Ruefli-Brasse A."/>
        </authorList>
    </citation>
    <scope>FUNCTION</scope>
</reference>
<reference evidence="7 8" key="7">
    <citation type="journal article" date="2015" name="Proc. Natl. Acad. Sci. U.S.A.">
        <title>Structure of bone morphogenetic protein 9 procomplex.</title>
        <authorList>
            <person name="Mi L.Z."/>
            <person name="Brown C.T."/>
            <person name="Gao Y."/>
            <person name="Tian Y."/>
            <person name="Le V.Q."/>
            <person name="Walz T."/>
            <person name="Springer T.A."/>
        </authorList>
    </citation>
    <scope>X-RAY CRYSTALLOGRAPHY (3.25 ANGSTROMS) OF 23-318</scope>
    <scope>FUNCTION</scope>
    <scope>GLYCOSYLATION AT ASN-135</scope>
    <scope>DISULFIDE BONDS</scope>
    <scope>SUBUNIT</scope>
    <scope>INTERACTION WITH ACVRL1; BMPR2; ACVR2B AND ACVR2A</scope>
</reference>
<feature type="signal peptide" evidence="3">
    <location>
        <begin position="1"/>
        <end position="22"/>
    </location>
</feature>
<feature type="propeptide" id="PRO_0000033904" evidence="1">
    <location>
        <begin position="23"/>
        <end position="318"/>
    </location>
</feature>
<feature type="chain" id="PRO_0000033905" description="Growth/differentiation factor 2">
    <location>
        <begin position="319"/>
        <end position="428"/>
    </location>
</feature>
<feature type="region of interest" description="Interaction with ENG" evidence="2">
    <location>
        <begin position="401"/>
        <end position="415"/>
    </location>
</feature>
<feature type="glycosylation site" description="N-linked (GlcNAc...) asparagine" evidence="3">
    <location>
        <position position="70"/>
    </location>
</feature>
<feature type="glycosylation site" description="N-linked (GlcNAc...) asparagine" evidence="5 7 8">
    <location>
        <position position="135"/>
    </location>
</feature>
<feature type="glycosylation site" description="N-linked (GlcNAc...) asparagine" evidence="3">
    <location>
        <position position="262"/>
    </location>
</feature>
<feature type="disulfide bond" evidence="5 7 8">
    <location>
        <begin position="155"/>
        <end position="236"/>
    </location>
</feature>
<feature type="disulfide bond" evidence="2">
    <location>
        <begin position="326"/>
        <end position="392"/>
    </location>
</feature>
<feature type="disulfide bond" evidence="2">
    <location>
        <begin position="355"/>
        <end position="425"/>
    </location>
</feature>
<feature type="disulfide bond" evidence="2">
    <location>
        <begin position="359"/>
        <end position="427"/>
    </location>
</feature>
<feature type="disulfide bond" description="Interchain" evidence="2">
    <location>
        <position position="391"/>
    </location>
</feature>
<feature type="sequence conflict" description="In Ref. 1; AAD40308." evidence="6" ref="1">
    <original>V</original>
    <variation>G</variation>
    <location>
        <position position="293"/>
    </location>
</feature>
<feature type="sequence conflict" description="In Ref. 2; AAD56961." evidence="6" ref="2">
    <original>K</original>
    <variation>E</variation>
    <location>
        <position position="382"/>
    </location>
</feature>
<feature type="helix" evidence="9">
    <location>
        <begin position="86"/>
        <end position="96"/>
    </location>
</feature>
<feature type="strand" evidence="9">
    <location>
        <begin position="106"/>
        <end position="112"/>
    </location>
</feature>
<feature type="strand" evidence="9">
    <location>
        <begin position="115"/>
        <end position="119"/>
    </location>
</feature>
<feature type="strand" evidence="9">
    <location>
        <begin position="123"/>
        <end position="125"/>
    </location>
</feature>
<feature type="strand" evidence="9">
    <location>
        <begin position="127"/>
        <end position="133"/>
    </location>
</feature>
<feature type="strand" evidence="9">
    <location>
        <begin position="142"/>
        <end position="155"/>
    </location>
</feature>
<feature type="helix" evidence="9">
    <location>
        <begin position="161"/>
        <end position="163"/>
    </location>
</feature>
<feature type="strand" evidence="9">
    <location>
        <begin position="167"/>
        <end position="176"/>
    </location>
</feature>
<feature type="strand" evidence="9">
    <location>
        <begin position="185"/>
        <end position="196"/>
    </location>
</feature>
<feature type="strand" evidence="9">
    <location>
        <begin position="198"/>
        <end position="205"/>
    </location>
</feature>
<feature type="helix" evidence="9">
    <location>
        <begin position="207"/>
        <end position="214"/>
    </location>
</feature>
<feature type="turn" evidence="9">
    <location>
        <begin position="217"/>
        <end position="219"/>
    </location>
</feature>
<feature type="strand" evidence="9">
    <location>
        <begin position="223"/>
        <end position="231"/>
    </location>
</feature>
<feature type="strand" evidence="9">
    <location>
        <begin position="233"/>
        <end position="235"/>
    </location>
</feature>
<feature type="strand" evidence="9">
    <location>
        <begin position="239"/>
        <end position="241"/>
    </location>
</feature>
<feature type="strand" evidence="9">
    <location>
        <begin position="252"/>
        <end position="259"/>
    </location>
</feature>
<feature type="turn" evidence="9">
    <location>
        <begin position="260"/>
        <end position="263"/>
    </location>
</feature>
<feature type="helix" evidence="9">
    <location>
        <begin position="264"/>
        <end position="277"/>
    </location>
</feature>
<proteinExistence type="evidence at protein level"/>
<keyword id="KW-0002">3D-structure</keyword>
<keyword id="KW-0037">Angiogenesis</keyword>
<keyword id="KW-0165">Cleavage on pair of basic residues</keyword>
<keyword id="KW-0202">Cytokine</keyword>
<keyword id="KW-1015">Disulfide bond</keyword>
<keyword id="KW-0325">Glycoprotein</keyword>
<keyword id="KW-0339">Growth factor</keyword>
<keyword id="KW-1185">Reference proteome</keyword>
<keyword id="KW-0964">Secreted</keyword>
<keyword id="KW-0732">Signal</keyword>
<organism>
    <name type="scientific">Mus musculus</name>
    <name type="common">Mouse</name>
    <dbReference type="NCBI Taxonomy" id="10090"/>
    <lineage>
        <taxon>Eukaryota</taxon>
        <taxon>Metazoa</taxon>
        <taxon>Chordata</taxon>
        <taxon>Craniata</taxon>
        <taxon>Vertebrata</taxon>
        <taxon>Euteleostomi</taxon>
        <taxon>Mammalia</taxon>
        <taxon>Eutheria</taxon>
        <taxon>Euarchontoglires</taxon>
        <taxon>Glires</taxon>
        <taxon>Rodentia</taxon>
        <taxon>Myomorpha</taxon>
        <taxon>Muroidea</taxon>
        <taxon>Muridae</taxon>
        <taxon>Murinae</taxon>
        <taxon>Mus</taxon>
        <taxon>Mus</taxon>
    </lineage>
</organism>
<sequence length="428" mass="47703">MSPGAFRVALLPLFLLVCVTQQKPLQNWEQASPGENAHSSLGLSGAGEEGVFDLQMFLENMKVDFLRSLNLSGIPSQDKTRAEPPQYMIDLYNRYTTDKSSTPASNIVRSFSVEDAISTAATEDFPFQKHILIFNISIPRHEQITRAELRLYVSCQNDVDSTHGLEGSMVVYDVLEDSETWDQATGTKTFLVSQDIRDEGWETLEVSSAVKRWVRADSTTNKNKLEVTVQSHRESCDTLDISVPPGSKNLPFFVVFSNDRSNGTKETRLELKEMIGHEQETMLVKTAKNAYQVAGESQEEEGLDGYTAVGPLLARRKRSTGASSHCQKTSLRVNFEDIGWDSWIIAPKEYDAYECKGGCFFPLADDVTPTKHAIVQTLVHLKFPTKVGKACCVPTKLSPISILYKDDMGVPTLKYHYEGMSVAECGCR</sequence>
<name>GDF2_MOUSE</name>
<comment type="function">
    <text evidence="2 4 5">Potent circulating inhibitor of angiogenesis (By similarity). Signals through the type I activin receptor ACVRL1 but not other Alks (PubMed:25751889). Signaling through SMAD1 in endothelial cells requires TGF-beta coreceptor endoglin/ENG (PubMed:23300529).</text>
</comment>
<comment type="subunit">
    <text evidence="2 5">Homodimer; disulfide-linked. Detected in extracellular fluid as mature homodimer, and in complex with its propeptide (By similarity). Interacts with ACVRL1, BMPR2 and ACVR2B with high affinity (in vitro) (PubMed:25751889). Identified in a complex with ACVRL1 and ACVR2B (By similarity). Has ten times lower affinity for ACVR2A (in vitro) (PubMed:25751889). Interacts with ENG, forming a heterotetramer with a 2:2 stoichiometry. Can form a heteromeric complex with ENG and ACVRL1 (By similarity). Interacts with type I receptor ACVR1 (By similarity).</text>
</comment>
<comment type="subcellular location">
    <subcellularLocation>
        <location evidence="2">Secreted</location>
    </subcellularLocation>
</comment>
<comment type="PTM">
    <text evidence="2">A reversible disulfide bond can be formed between the two subunits in the homodimer; this has no effect on GDF2 activity.</text>
</comment>
<comment type="similarity">
    <text evidence="6">Belongs to the TGF-beta family.</text>
</comment>
<comment type="caution">
    <text evidence="5 6">Can promote osteogenic differentiation in vitro (PubMed:25751889). This is probably not physiologically relevant.</text>
</comment>
<protein>
    <recommendedName>
        <fullName>Growth/differentiation factor 2</fullName>
        <shortName>GDF-2</shortName>
    </recommendedName>
    <alternativeName>
        <fullName>Bone morphogenetic protein 9</fullName>
        <shortName>BMP-9</shortName>
    </alternativeName>
</protein>